<comment type="function">
    <text evidence="3 4 5">In the soluble state, catalyzes glutaredoxin-like thiol disulfide exchange reactions with reduced glutathione as electron donor (By similarity). Can insert into membranes and form voltage-dependent chloride-selective channels. The channel opens upon membrane depolarization at positive voltages and closes at negative membrane voltages (By similarity). May play a critical role in water-secreting cells, possibly through the regulation of chloride ion transport (By similarity).</text>
</comment>
<comment type="catalytic activity">
    <reaction evidence="3">
        <text>chloride(in) = chloride(out)</text>
        <dbReference type="Rhea" id="RHEA:29823"/>
        <dbReference type="ChEBI" id="CHEBI:17996"/>
    </reaction>
</comment>
<comment type="activity regulation">
    <text evidence="3">Channel activity is redox- and pH-regulated. Inhibited by IAA-94.</text>
</comment>
<comment type="subunit">
    <text evidence="2 9">Monomer (soluble state) (PubMed:29720717). Interacts with dopamine receptors DRD2, DRD3 and DRD4 (By similarity).</text>
</comment>
<comment type="subcellular location">
    <subcellularLocation>
        <location evidence="1">Cytoplasm</location>
    </subcellularLocation>
    <subcellularLocation>
        <location evidence="1">Cell membrane</location>
        <topology evidence="1">Single-pass membrane protein</topology>
    </subcellularLocation>
    <text evidence="1">Predominantly cytoplasmic. Upon chloride ion efflux from the cell, it is translocated to the plasma membrane (By similarity).</text>
</comment>
<comment type="domain">
    <text evidence="5">The active G-site contains a monothiol Cys-X-X-Ser motif which mediates glutathione-dependent redox catalysis.</text>
</comment>
<comment type="domain">
    <text evidence="9">Members of this family may change from a globular, soluble state to a state where the N-terminal domain is inserted into the membrane and functions as a chloride channel. The redox status of the active cysteine in Cys-X-X-Cys/Ser motif likely determines the capacity to adopt a soluble or membrane-inserted state. A conformation change of the N-terminal domain is thought to expose hydrophobic surfaces that trigger membrane insertion.</text>
</comment>
<comment type="PTM">
    <text evidence="4">Phosphorylated.</text>
</comment>
<comment type="similarity">
    <text evidence="10">Belongs to the chloride channel CLIC family.</text>
</comment>
<gene>
    <name type="primary">Clic6</name>
</gene>
<keyword id="KW-0002">3D-structure</keyword>
<keyword id="KW-1003">Cell membrane</keyword>
<keyword id="KW-0868">Chloride</keyword>
<keyword id="KW-0869">Chloride channel</keyword>
<keyword id="KW-0963">Cytoplasm</keyword>
<keyword id="KW-0407">Ion channel</keyword>
<keyword id="KW-0406">Ion transport</keyword>
<keyword id="KW-0472">Membrane</keyword>
<keyword id="KW-0560">Oxidoreductase</keyword>
<keyword id="KW-0597">Phosphoprotein</keyword>
<keyword id="KW-1185">Reference proteome</keyword>
<keyword id="KW-0677">Repeat</keyword>
<keyword id="KW-0812">Transmembrane</keyword>
<keyword id="KW-1133">Transmembrane helix</keyword>
<keyword id="KW-0813">Transport</keyword>
<keyword id="KW-0851">Voltage-gated channel</keyword>
<feature type="chain" id="PRO_0000144218" description="Chloride intracellular channel protein 6">
    <location>
        <begin position="1"/>
        <end position="596"/>
    </location>
</feature>
<feature type="transmembrane region" description="Helical; Note=After insertion into the membrane" evidence="6">
    <location>
        <begin position="381"/>
        <end position="401"/>
    </location>
</feature>
<feature type="domain" description="GST C-terminal" evidence="7">
    <location>
        <begin position="425"/>
        <end position="596"/>
    </location>
</feature>
<feature type="region of interest" description="Disordered" evidence="8">
    <location>
        <begin position="1"/>
        <end position="360"/>
    </location>
</feature>
<feature type="short sequence motif" description="G-site" evidence="5">
    <location>
        <begin position="379"/>
        <end position="382"/>
    </location>
</feature>
<feature type="compositionally biased region" description="Basic and acidic residues" evidence="8">
    <location>
        <begin position="34"/>
        <end position="48"/>
    </location>
</feature>
<feature type="compositionally biased region" description="Gly residues" evidence="8">
    <location>
        <begin position="65"/>
        <end position="74"/>
    </location>
</feature>
<feature type="compositionally biased region" description="Low complexity" evidence="8">
    <location>
        <begin position="83"/>
        <end position="98"/>
    </location>
</feature>
<feature type="compositionally biased region" description="Polar residues" evidence="8">
    <location>
        <begin position="118"/>
        <end position="130"/>
    </location>
</feature>
<feature type="compositionally biased region" description="Acidic residues" evidence="8">
    <location>
        <begin position="148"/>
        <end position="160"/>
    </location>
</feature>
<feature type="compositionally biased region" description="Low complexity" evidence="8">
    <location>
        <begin position="197"/>
        <end position="213"/>
    </location>
</feature>
<feature type="compositionally biased region" description="Low complexity" evidence="8">
    <location>
        <begin position="225"/>
        <end position="244"/>
    </location>
</feature>
<feature type="compositionally biased region" description="Basic and acidic residues" evidence="8">
    <location>
        <begin position="246"/>
        <end position="290"/>
    </location>
</feature>
<feature type="compositionally biased region" description="Basic and acidic residues" evidence="8">
    <location>
        <begin position="338"/>
        <end position="348"/>
    </location>
</feature>
<feature type="modified residue" description="Phosphoserine" evidence="2">
    <location>
        <position position="40"/>
    </location>
</feature>
<feature type="modified residue" description="Phosphoserine" evidence="2">
    <location>
        <position position="304"/>
    </location>
</feature>
<feature type="mutagenesis site" description="Reduces solubility and disrupts the globular structure." evidence="9">
    <original>Q</original>
    <variation>A</variation>
    <location>
        <position position="383"/>
    </location>
</feature>
<feature type="strand" evidence="11">
    <location>
        <begin position="363"/>
        <end position="369"/>
    </location>
</feature>
<feature type="strand" evidence="11">
    <location>
        <begin position="373"/>
        <end position="376"/>
    </location>
</feature>
<feature type="helix" evidence="11">
    <location>
        <begin position="380"/>
        <end position="392"/>
    </location>
</feature>
<feature type="strand" evidence="11">
    <location>
        <begin position="396"/>
        <end position="401"/>
    </location>
</feature>
<feature type="strand" evidence="11">
    <location>
        <begin position="421"/>
        <end position="424"/>
    </location>
</feature>
<feature type="strand" evidence="11">
    <location>
        <begin position="427"/>
        <end position="429"/>
    </location>
</feature>
<feature type="helix" evidence="11">
    <location>
        <begin position="432"/>
        <end position="442"/>
    </location>
</feature>
<feature type="turn" evidence="11">
    <location>
        <begin position="445"/>
        <end position="447"/>
    </location>
</feature>
<feature type="helix" evidence="11">
    <location>
        <begin position="457"/>
        <end position="460"/>
    </location>
</feature>
<feature type="turn" evidence="11">
    <location>
        <begin position="461"/>
        <end position="464"/>
    </location>
</feature>
<feature type="helix" evidence="11">
    <location>
        <begin position="465"/>
        <end position="474"/>
    </location>
</feature>
<feature type="helix" evidence="11">
    <location>
        <begin position="478"/>
        <end position="480"/>
    </location>
</feature>
<feature type="helix" evidence="11">
    <location>
        <begin position="481"/>
        <end position="500"/>
    </location>
</feature>
<feature type="strand" evidence="11">
    <location>
        <begin position="521"/>
        <end position="527"/>
    </location>
</feature>
<feature type="helix" evidence="11">
    <location>
        <begin position="530"/>
        <end position="550"/>
    </location>
</feature>
<feature type="helix" evidence="11">
    <location>
        <begin position="559"/>
        <end position="569"/>
    </location>
</feature>
<feature type="helix" evidence="11">
    <location>
        <begin position="572"/>
        <end position="575"/>
    </location>
</feature>
<feature type="helix" evidence="11">
    <location>
        <begin position="581"/>
        <end position="587"/>
    </location>
</feature>
<feature type="helix" evidence="11">
    <location>
        <begin position="589"/>
        <end position="592"/>
    </location>
</feature>
<sequence>MAEATEPKEVAPGSQGQPEGATIEGPGEPGAADLEGREASEEAAEAPRDLGAGVEARASGKEEGGCGQDEGTGGAQAQDPRTGPEAETPGASGAPGEAEAAERDPEGAIPQGAEEAPSAQQVQGMSSGLDSQGEAPEVPGDSRREPEDPTASEAGEEAESGQEAQGGGALGLQINPEVQGLAGDNMDTEAPAGGPLGSESEPQGGGESSPQPQDEAIEIVTTEIGGNESGELAGASAADAAGEGETLGKDGSEEAASEDARVDAHENGDQGKLQEETGEEEARPEPELKGPCEGAIQEKPPDGSLDGEEAKSTEHEEESQAELSNHLAEEPSVQGGEELGRVNGRRENGPALEEGDPGQEHDITLFVKAGYDGESIGNCPFSQRLFMILWLKGVIFNVTTVDLKRKPADLQNLAPGTNPPFMTFDGEVKTDVNKIEEFLEEKLVPPRYPKLGTQHPESNSAGNDVFAKFSAFIKNTKKDANEIYEKNLLRALKKLDSYLNSPLPDEIDADSSEDVTVSQRKFLDGDELTLADCNLLPKLHIIKIVAKKYRDFEFPSEMTGIWRYLNNAYARDEFTNTCPADREIEHAYSDAAKRMK</sequence>
<protein>
    <recommendedName>
        <fullName>Chloride intracellular channel protein 6</fullName>
    </recommendedName>
    <alternativeName>
        <fullName>Glutaredoxin-like oxidoreductase CLIC6</fullName>
        <ecNumber evidence="5">1.8.-.-</ecNumber>
    </alternativeName>
</protein>
<proteinExistence type="evidence at protein level"/>
<dbReference type="EC" id="1.8.-.-" evidence="5"/>
<dbReference type="EMBL" id="AF448440">
    <property type="protein sequence ID" value="AAN76731.1"/>
    <property type="molecule type" value="mRNA"/>
</dbReference>
<dbReference type="EMBL" id="AK077599">
    <property type="protein sequence ID" value="BAC36890.1"/>
    <property type="molecule type" value="mRNA"/>
</dbReference>
<dbReference type="EMBL" id="BC075706">
    <property type="protein sequence ID" value="AAH75706.1"/>
    <property type="molecule type" value="mRNA"/>
</dbReference>
<dbReference type="CCDS" id="CCDS28338.1"/>
<dbReference type="RefSeq" id="NP_766057.1">
    <property type="nucleotide sequence ID" value="NM_172469.3"/>
</dbReference>
<dbReference type="PDB" id="6ERY">
    <property type="method" value="X-ray"/>
    <property type="resolution" value="1.79 A"/>
    <property type="chains" value="A/B=363-596"/>
</dbReference>
<dbReference type="PDB" id="6ERZ">
    <property type="method" value="X-ray"/>
    <property type="resolution" value="1.92 A"/>
    <property type="chains" value="A/B=363-596"/>
</dbReference>
<dbReference type="PDBsum" id="6ERY"/>
<dbReference type="PDBsum" id="6ERZ"/>
<dbReference type="SMR" id="Q8BHB9"/>
<dbReference type="FunCoup" id="Q8BHB9">
    <property type="interactions" value="497"/>
</dbReference>
<dbReference type="STRING" id="10090.ENSMUSP00000023670"/>
<dbReference type="iPTMnet" id="Q8BHB9"/>
<dbReference type="PhosphoSitePlus" id="Q8BHB9"/>
<dbReference type="jPOST" id="Q8BHB9"/>
<dbReference type="PaxDb" id="10090-ENSMUSP00000023670"/>
<dbReference type="PeptideAtlas" id="Q8BHB9"/>
<dbReference type="ProteomicsDB" id="279106"/>
<dbReference type="Antibodypedia" id="8114">
    <property type="antibodies" value="195 antibodies from 26 providers"/>
</dbReference>
<dbReference type="DNASU" id="209195"/>
<dbReference type="Ensembl" id="ENSMUST00000023670.4">
    <property type="protein sequence ID" value="ENSMUSP00000023670.4"/>
    <property type="gene ID" value="ENSMUSG00000022949.10"/>
</dbReference>
<dbReference type="GeneID" id="209195"/>
<dbReference type="KEGG" id="mmu:209195"/>
<dbReference type="UCSC" id="uc007zzg.1">
    <property type="organism name" value="mouse"/>
</dbReference>
<dbReference type="AGR" id="MGI:2146607"/>
<dbReference type="CTD" id="54102"/>
<dbReference type="MGI" id="MGI:2146607">
    <property type="gene designation" value="Clic6"/>
</dbReference>
<dbReference type="VEuPathDB" id="HostDB:ENSMUSG00000022949"/>
<dbReference type="eggNOG" id="KOG1422">
    <property type="taxonomic scope" value="Eukaryota"/>
</dbReference>
<dbReference type="GeneTree" id="ENSGT00940000159602"/>
<dbReference type="HOGENOM" id="CLU_023994_0_0_1"/>
<dbReference type="InParanoid" id="Q8BHB9"/>
<dbReference type="OMA" id="NMDTEAP"/>
<dbReference type="OrthoDB" id="1935530at2759"/>
<dbReference type="PhylomeDB" id="Q8BHB9"/>
<dbReference type="TreeFam" id="TF315438"/>
<dbReference type="BioGRID-ORCS" id="209195">
    <property type="hits" value="3 hits in 77 CRISPR screens"/>
</dbReference>
<dbReference type="ChiTaRS" id="Clic6">
    <property type="organism name" value="mouse"/>
</dbReference>
<dbReference type="PRO" id="PR:Q8BHB9"/>
<dbReference type="Proteomes" id="UP000000589">
    <property type="component" value="Chromosome 16"/>
</dbReference>
<dbReference type="RNAct" id="Q8BHB9">
    <property type="molecule type" value="protein"/>
</dbReference>
<dbReference type="Bgee" id="ENSMUSG00000022949">
    <property type="expression patterns" value="Expressed in choroid plexus epithelium and 179 other cell types or tissues"/>
</dbReference>
<dbReference type="ExpressionAtlas" id="Q8BHB9">
    <property type="expression patterns" value="baseline and differential"/>
</dbReference>
<dbReference type="GO" id="GO:0034707">
    <property type="term" value="C:chloride channel complex"/>
    <property type="evidence" value="ECO:0007669"/>
    <property type="project" value="UniProtKB-KW"/>
</dbReference>
<dbReference type="GO" id="GO:0005737">
    <property type="term" value="C:cytoplasm"/>
    <property type="evidence" value="ECO:0007669"/>
    <property type="project" value="UniProtKB-SubCell"/>
</dbReference>
<dbReference type="GO" id="GO:0005886">
    <property type="term" value="C:plasma membrane"/>
    <property type="evidence" value="ECO:0007669"/>
    <property type="project" value="UniProtKB-SubCell"/>
</dbReference>
<dbReference type="GO" id="GO:0005254">
    <property type="term" value="F:chloride channel activity"/>
    <property type="evidence" value="ECO:0000250"/>
    <property type="project" value="UniProtKB"/>
</dbReference>
<dbReference type="GO" id="GO:0016491">
    <property type="term" value="F:oxidoreductase activity"/>
    <property type="evidence" value="ECO:0007669"/>
    <property type="project" value="UniProtKB-KW"/>
</dbReference>
<dbReference type="CDD" id="cd10301">
    <property type="entry name" value="GST_C_CLIC6"/>
    <property type="match status" value="1"/>
</dbReference>
<dbReference type="CDD" id="cd03061">
    <property type="entry name" value="GST_N_CLIC"/>
    <property type="match status" value="1"/>
</dbReference>
<dbReference type="FunFam" id="1.20.1050.10:FF:000001">
    <property type="entry name" value="Chloride intracellular channel 2"/>
    <property type="match status" value="1"/>
</dbReference>
<dbReference type="FunFam" id="3.40.30.10:FF:000021">
    <property type="entry name" value="Chloride intracellular channel 4"/>
    <property type="match status" value="1"/>
</dbReference>
<dbReference type="Gene3D" id="1.20.1050.10">
    <property type="match status" value="1"/>
</dbReference>
<dbReference type="Gene3D" id="3.40.30.10">
    <property type="entry name" value="Glutaredoxin"/>
    <property type="match status" value="1"/>
</dbReference>
<dbReference type="InterPro" id="IPR002946">
    <property type="entry name" value="CLIC"/>
</dbReference>
<dbReference type="InterPro" id="IPR053823">
    <property type="entry name" value="CLIC_N"/>
</dbReference>
<dbReference type="InterPro" id="IPR010987">
    <property type="entry name" value="Glutathione-S-Trfase_C-like"/>
</dbReference>
<dbReference type="InterPro" id="IPR036282">
    <property type="entry name" value="Glutathione-S-Trfase_C_sf"/>
</dbReference>
<dbReference type="InterPro" id="IPR040079">
    <property type="entry name" value="Glutathione_S-Trfase"/>
</dbReference>
<dbReference type="InterPro" id="IPR036249">
    <property type="entry name" value="Thioredoxin-like_sf"/>
</dbReference>
<dbReference type="NCBIfam" id="TIGR00862">
    <property type="entry name" value="O-ClC"/>
    <property type="match status" value="1"/>
</dbReference>
<dbReference type="PANTHER" id="PTHR45476:SF1">
    <property type="entry name" value="CHLORIDE INTRACELLULAR CHANNEL PROTEIN 6"/>
    <property type="match status" value="1"/>
</dbReference>
<dbReference type="PANTHER" id="PTHR45476">
    <property type="entry name" value="CHLORIDE INTRACELLULAR CHANNEL PROTEIN 6-RELATED"/>
    <property type="match status" value="1"/>
</dbReference>
<dbReference type="Pfam" id="PF22441">
    <property type="entry name" value="CLIC-like_N"/>
    <property type="match status" value="1"/>
</dbReference>
<dbReference type="PRINTS" id="PR01263">
    <property type="entry name" value="INTCLCHANNEL"/>
</dbReference>
<dbReference type="SFLD" id="SFLDS00019">
    <property type="entry name" value="Glutathione_Transferase_(cytos"/>
    <property type="match status" value="1"/>
</dbReference>
<dbReference type="SFLD" id="SFLDG00358">
    <property type="entry name" value="Main_(cytGST)"/>
    <property type="match status" value="1"/>
</dbReference>
<dbReference type="SUPFAM" id="SSF47616">
    <property type="entry name" value="GST C-terminal domain-like"/>
    <property type="match status" value="1"/>
</dbReference>
<dbReference type="SUPFAM" id="SSF52833">
    <property type="entry name" value="Thioredoxin-like"/>
    <property type="match status" value="1"/>
</dbReference>
<dbReference type="PROSITE" id="PS50405">
    <property type="entry name" value="GST_CTER"/>
    <property type="match status" value="1"/>
</dbReference>
<evidence type="ECO:0000250" key="1"/>
<evidence type="ECO:0000250" key="2">
    <source>
        <dbReference type="UniProtKB" id="Q811Q2"/>
    </source>
</evidence>
<evidence type="ECO:0000250" key="3">
    <source>
        <dbReference type="UniProtKB" id="Q96NY7"/>
    </source>
</evidence>
<evidence type="ECO:0000250" key="4">
    <source>
        <dbReference type="UniProtKB" id="Q9N2G5"/>
    </source>
</evidence>
<evidence type="ECO:0000250" key="5">
    <source>
        <dbReference type="UniProtKB" id="Q9Y696"/>
    </source>
</evidence>
<evidence type="ECO:0000255" key="6"/>
<evidence type="ECO:0000255" key="7">
    <source>
        <dbReference type="PROSITE-ProRule" id="PRU00685"/>
    </source>
</evidence>
<evidence type="ECO:0000256" key="8">
    <source>
        <dbReference type="SAM" id="MobiDB-lite"/>
    </source>
</evidence>
<evidence type="ECO:0000269" key="9">
    <source>
    </source>
</evidence>
<evidence type="ECO:0000305" key="10"/>
<evidence type="ECO:0007829" key="11">
    <source>
        <dbReference type="PDB" id="6ERY"/>
    </source>
</evidence>
<reference key="1">
    <citation type="journal article" date="2003" name="Gene">
        <title>Identification of a novel member of the CLIC family, CLIC6, mapping to 21q22.12.</title>
        <authorList>
            <person name="Friedli M."/>
            <person name="Guipponi M."/>
            <person name="Bertrand S."/>
            <person name="Bertrand D."/>
            <person name="Neerman-Arbez M."/>
            <person name="Scott H.S."/>
            <person name="Antonarakis S.E."/>
            <person name="Reymond A."/>
        </authorList>
    </citation>
    <scope>NUCLEOTIDE SEQUENCE [MRNA]</scope>
</reference>
<reference key="2">
    <citation type="journal article" date="2005" name="Science">
        <title>The transcriptional landscape of the mammalian genome.</title>
        <authorList>
            <person name="Carninci P."/>
            <person name="Kasukawa T."/>
            <person name="Katayama S."/>
            <person name="Gough J."/>
            <person name="Frith M.C."/>
            <person name="Maeda N."/>
            <person name="Oyama R."/>
            <person name="Ravasi T."/>
            <person name="Lenhard B."/>
            <person name="Wells C."/>
            <person name="Kodzius R."/>
            <person name="Shimokawa K."/>
            <person name="Bajic V.B."/>
            <person name="Brenner S.E."/>
            <person name="Batalov S."/>
            <person name="Forrest A.R."/>
            <person name="Zavolan M."/>
            <person name="Davis M.J."/>
            <person name="Wilming L.G."/>
            <person name="Aidinis V."/>
            <person name="Allen J.E."/>
            <person name="Ambesi-Impiombato A."/>
            <person name="Apweiler R."/>
            <person name="Aturaliya R.N."/>
            <person name="Bailey T.L."/>
            <person name="Bansal M."/>
            <person name="Baxter L."/>
            <person name="Beisel K.W."/>
            <person name="Bersano T."/>
            <person name="Bono H."/>
            <person name="Chalk A.M."/>
            <person name="Chiu K.P."/>
            <person name="Choudhary V."/>
            <person name="Christoffels A."/>
            <person name="Clutterbuck D.R."/>
            <person name="Crowe M.L."/>
            <person name="Dalla E."/>
            <person name="Dalrymple B.P."/>
            <person name="de Bono B."/>
            <person name="Della Gatta G."/>
            <person name="di Bernardo D."/>
            <person name="Down T."/>
            <person name="Engstrom P."/>
            <person name="Fagiolini M."/>
            <person name="Faulkner G."/>
            <person name="Fletcher C.F."/>
            <person name="Fukushima T."/>
            <person name="Furuno M."/>
            <person name="Futaki S."/>
            <person name="Gariboldi M."/>
            <person name="Georgii-Hemming P."/>
            <person name="Gingeras T.R."/>
            <person name="Gojobori T."/>
            <person name="Green R.E."/>
            <person name="Gustincich S."/>
            <person name="Harbers M."/>
            <person name="Hayashi Y."/>
            <person name="Hensch T.K."/>
            <person name="Hirokawa N."/>
            <person name="Hill D."/>
            <person name="Huminiecki L."/>
            <person name="Iacono M."/>
            <person name="Ikeo K."/>
            <person name="Iwama A."/>
            <person name="Ishikawa T."/>
            <person name="Jakt M."/>
            <person name="Kanapin A."/>
            <person name="Katoh M."/>
            <person name="Kawasawa Y."/>
            <person name="Kelso J."/>
            <person name="Kitamura H."/>
            <person name="Kitano H."/>
            <person name="Kollias G."/>
            <person name="Krishnan S.P."/>
            <person name="Kruger A."/>
            <person name="Kummerfeld S.K."/>
            <person name="Kurochkin I.V."/>
            <person name="Lareau L.F."/>
            <person name="Lazarevic D."/>
            <person name="Lipovich L."/>
            <person name="Liu J."/>
            <person name="Liuni S."/>
            <person name="McWilliam S."/>
            <person name="Madan Babu M."/>
            <person name="Madera M."/>
            <person name="Marchionni L."/>
            <person name="Matsuda H."/>
            <person name="Matsuzawa S."/>
            <person name="Miki H."/>
            <person name="Mignone F."/>
            <person name="Miyake S."/>
            <person name="Morris K."/>
            <person name="Mottagui-Tabar S."/>
            <person name="Mulder N."/>
            <person name="Nakano N."/>
            <person name="Nakauchi H."/>
            <person name="Ng P."/>
            <person name="Nilsson R."/>
            <person name="Nishiguchi S."/>
            <person name="Nishikawa S."/>
            <person name="Nori F."/>
            <person name="Ohara O."/>
            <person name="Okazaki Y."/>
            <person name="Orlando V."/>
            <person name="Pang K.C."/>
            <person name="Pavan W.J."/>
            <person name="Pavesi G."/>
            <person name="Pesole G."/>
            <person name="Petrovsky N."/>
            <person name="Piazza S."/>
            <person name="Reed J."/>
            <person name="Reid J.F."/>
            <person name="Ring B.Z."/>
            <person name="Ringwald M."/>
            <person name="Rost B."/>
            <person name="Ruan Y."/>
            <person name="Salzberg S.L."/>
            <person name="Sandelin A."/>
            <person name="Schneider C."/>
            <person name="Schoenbach C."/>
            <person name="Sekiguchi K."/>
            <person name="Semple C.A."/>
            <person name="Seno S."/>
            <person name="Sessa L."/>
            <person name="Sheng Y."/>
            <person name="Shibata Y."/>
            <person name="Shimada H."/>
            <person name="Shimada K."/>
            <person name="Silva D."/>
            <person name="Sinclair B."/>
            <person name="Sperling S."/>
            <person name="Stupka E."/>
            <person name="Sugiura K."/>
            <person name="Sultana R."/>
            <person name="Takenaka Y."/>
            <person name="Taki K."/>
            <person name="Tammoja K."/>
            <person name="Tan S.L."/>
            <person name="Tang S."/>
            <person name="Taylor M.S."/>
            <person name="Tegner J."/>
            <person name="Teichmann S.A."/>
            <person name="Ueda H.R."/>
            <person name="van Nimwegen E."/>
            <person name="Verardo R."/>
            <person name="Wei C.L."/>
            <person name="Yagi K."/>
            <person name="Yamanishi H."/>
            <person name="Zabarovsky E."/>
            <person name="Zhu S."/>
            <person name="Zimmer A."/>
            <person name="Hide W."/>
            <person name="Bult C."/>
            <person name="Grimmond S.M."/>
            <person name="Teasdale R.D."/>
            <person name="Liu E.T."/>
            <person name="Brusic V."/>
            <person name="Quackenbush J."/>
            <person name="Wahlestedt C."/>
            <person name="Mattick J.S."/>
            <person name="Hume D.A."/>
            <person name="Kai C."/>
            <person name="Sasaki D."/>
            <person name="Tomaru Y."/>
            <person name="Fukuda S."/>
            <person name="Kanamori-Katayama M."/>
            <person name="Suzuki M."/>
            <person name="Aoki J."/>
            <person name="Arakawa T."/>
            <person name="Iida J."/>
            <person name="Imamura K."/>
            <person name="Itoh M."/>
            <person name="Kato T."/>
            <person name="Kawaji H."/>
            <person name="Kawagashira N."/>
            <person name="Kawashima T."/>
            <person name="Kojima M."/>
            <person name="Kondo S."/>
            <person name="Konno H."/>
            <person name="Nakano K."/>
            <person name="Ninomiya N."/>
            <person name="Nishio T."/>
            <person name="Okada M."/>
            <person name="Plessy C."/>
            <person name="Shibata K."/>
            <person name="Shiraki T."/>
            <person name="Suzuki S."/>
            <person name="Tagami M."/>
            <person name="Waki K."/>
            <person name="Watahiki A."/>
            <person name="Okamura-Oho Y."/>
            <person name="Suzuki H."/>
            <person name="Kawai J."/>
            <person name="Hayashizaki Y."/>
        </authorList>
    </citation>
    <scope>NUCLEOTIDE SEQUENCE [LARGE SCALE MRNA]</scope>
    <source>
        <strain>C57BL/6J</strain>
    </source>
</reference>
<reference key="3">
    <citation type="journal article" date="2004" name="Genome Res.">
        <title>The status, quality, and expansion of the NIH full-length cDNA project: the Mammalian Gene Collection (MGC).</title>
        <authorList>
            <consortium name="The MGC Project Team"/>
        </authorList>
    </citation>
    <scope>NUCLEOTIDE SEQUENCE [LARGE SCALE MRNA]</scope>
    <source>
        <strain>FVB/N</strain>
        <tissue>Mammary gland</tissue>
    </source>
</reference>
<reference key="4">
    <citation type="journal article" date="2010" name="Cell">
        <title>A tissue-specific atlas of mouse protein phosphorylation and expression.</title>
        <authorList>
            <person name="Huttlin E.L."/>
            <person name="Jedrychowski M.P."/>
            <person name="Elias J.E."/>
            <person name="Goswami T."/>
            <person name="Rad R."/>
            <person name="Beausoleil S.A."/>
            <person name="Villen J."/>
            <person name="Haas W."/>
            <person name="Sowa M.E."/>
            <person name="Gygi S.P."/>
        </authorList>
    </citation>
    <scope>IDENTIFICATION BY MASS SPECTROMETRY [LARGE SCALE ANALYSIS]</scope>
    <source>
        <tissue>Brain</tissue>
    </source>
</reference>
<reference key="5">
    <citation type="journal article" date="2018" name="Sci. Rep.">
        <title>Inherent flexibility of CLIC6 revealed by crystallographic and solution studies.</title>
        <authorList>
            <person name="Ferofontov A."/>
            <person name="Strulovich R."/>
            <person name="Marom M."/>
            <person name="Giladi M."/>
            <person name="Haitin Y."/>
        </authorList>
    </citation>
    <scope>X-RAY CRYSTALLOGRAPHY (1.79 ANGSTROMS) OF 363-596</scope>
    <scope>SUBUNIT</scope>
    <scope>DOMAIN</scope>
    <scope>MUTAGENESIS OF GLN-383</scope>
</reference>
<accession>Q8BHB9</accession>
<organism>
    <name type="scientific">Mus musculus</name>
    <name type="common">Mouse</name>
    <dbReference type="NCBI Taxonomy" id="10090"/>
    <lineage>
        <taxon>Eukaryota</taxon>
        <taxon>Metazoa</taxon>
        <taxon>Chordata</taxon>
        <taxon>Craniata</taxon>
        <taxon>Vertebrata</taxon>
        <taxon>Euteleostomi</taxon>
        <taxon>Mammalia</taxon>
        <taxon>Eutheria</taxon>
        <taxon>Euarchontoglires</taxon>
        <taxon>Glires</taxon>
        <taxon>Rodentia</taxon>
        <taxon>Myomorpha</taxon>
        <taxon>Muroidea</taxon>
        <taxon>Muridae</taxon>
        <taxon>Murinae</taxon>
        <taxon>Mus</taxon>
        <taxon>Mus</taxon>
    </lineage>
</organism>
<name>CLIC6_MOUSE</name>